<dbReference type="EC" id="3.6.1.66" evidence="1"/>
<dbReference type="EMBL" id="CP001615">
    <property type="protein sequence ID" value="ACQ71550.1"/>
    <property type="molecule type" value="Genomic_DNA"/>
</dbReference>
<dbReference type="RefSeq" id="WP_015881109.1">
    <property type="nucleotide sequence ID" value="NC_012673.1"/>
</dbReference>
<dbReference type="SMR" id="C4L4I7"/>
<dbReference type="STRING" id="360911.EAT1b_2634"/>
<dbReference type="KEGG" id="eat:EAT1b_2634"/>
<dbReference type="eggNOG" id="COG0127">
    <property type="taxonomic scope" value="Bacteria"/>
</dbReference>
<dbReference type="HOGENOM" id="CLU_082080_0_2_9"/>
<dbReference type="OrthoDB" id="9807456at2"/>
<dbReference type="Proteomes" id="UP000000716">
    <property type="component" value="Chromosome"/>
</dbReference>
<dbReference type="GO" id="GO:0005829">
    <property type="term" value="C:cytosol"/>
    <property type="evidence" value="ECO:0007669"/>
    <property type="project" value="TreeGrafter"/>
</dbReference>
<dbReference type="GO" id="GO:0035870">
    <property type="term" value="F:dITP diphosphatase activity"/>
    <property type="evidence" value="ECO:0007669"/>
    <property type="project" value="RHEA"/>
</dbReference>
<dbReference type="GO" id="GO:0036220">
    <property type="term" value="F:ITP diphosphatase activity"/>
    <property type="evidence" value="ECO:0007669"/>
    <property type="project" value="UniProtKB-EC"/>
</dbReference>
<dbReference type="GO" id="GO:0046872">
    <property type="term" value="F:metal ion binding"/>
    <property type="evidence" value="ECO:0007669"/>
    <property type="project" value="UniProtKB-KW"/>
</dbReference>
<dbReference type="GO" id="GO:0000166">
    <property type="term" value="F:nucleotide binding"/>
    <property type="evidence" value="ECO:0007669"/>
    <property type="project" value="UniProtKB-KW"/>
</dbReference>
<dbReference type="GO" id="GO:0017111">
    <property type="term" value="F:ribonucleoside triphosphate phosphatase activity"/>
    <property type="evidence" value="ECO:0007669"/>
    <property type="project" value="InterPro"/>
</dbReference>
<dbReference type="GO" id="GO:0036222">
    <property type="term" value="F:XTP diphosphatase activity"/>
    <property type="evidence" value="ECO:0007669"/>
    <property type="project" value="RHEA"/>
</dbReference>
<dbReference type="GO" id="GO:0009117">
    <property type="term" value="P:nucleotide metabolic process"/>
    <property type="evidence" value="ECO:0007669"/>
    <property type="project" value="UniProtKB-KW"/>
</dbReference>
<dbReference type="GO" id="GO:0009146">
    <property type="term" value="P:purine nucleoside triphosphate catabolic process"/>
    <property type="evidence" value="ECO:0007669"/>
    <property type="project" value="UniProtKB-UniRule"/>
</dbReference>
<dbReference type="CDD" id="cd00515">
    <property type="entry name" value="HAM1"/>
    <property type="match status" value="1"/>
</dbReference>
<dbReference type="FunFam" id="3.90.950.10:FF:000001">
    <property type="entry name" value="dITP/XTP pyrophosphatase"/>
    <property type="match status" value="1"/>
</dbReference>
<dbReference type="Gene3D" id="3.90.950.10">
    <property type="match status" value="1"/>
</dbReference>
<dbReference type="HAMAP" id="MF_01405">
    <property type="entry name" value="Non_canon_purine_NTPase"/>
    <property type="match status" value="1"/>
</dbReference>
<dbReference type="InterPro" id="IPR020922">
    <property type="entry name" value="dITP/XTP_pyrophosphatase"/>
</dbReference>
<dbReference type="InterPro" id="IPR029001">
    <property type="entry name" value="ITPase-like_fam"/>
</dbReference>
<dbReference type="InterPro" id="IPR002637">
    <property type="entry name" value="RdgB/HAM1"/>
</dbReference>
<dbReference type="NCBIfam" id="NF011397">
    <property type="entry name" value="PRK14822.1"/>
    <property type="match status" value="1"/>
</dbReference>
<dbReference type="NCBIfam" id="TIGR00042">
    <property type="entry name" value="RdgB/HAM1 family non-canonical purine NTP pyrophosphatase"/>
    <property type="match status" value="1"/>
</dbReference>
<dbReference type="PANTHER" id="PTHR11067:SF9">
    <property type="entry name" value="INOSINE TRIPHOSPHATE PYROPHOSPHATASE"/>
    <property type="match status" value="1"/>
</dbReference>
<dbReference type="PANTHER" id="PTHR11067">
    <property type="entry name" value="INOSINE TRIPHOSPHATE PYROPHOSPHATASE/HAM1 PROTEIN"/>
    <property type="match status" value="1"/>
</dbReference>
<dbReference type="Pfam" id="PF01725">
    <property type="entry name" value="Ham1p_like"/>
    <property type="match status" value="1"/>
</dbReference>
<dbReference type="SUPFAM" id="SSF52972">
    <property type="entry name" value="ITPase-like"/>
    <property type="match status" value="1"/>
</dbReference>
<proteinExistence type="inferred from homology"/>
<evidence type="ECO:0000255" key="1">
    <source>
        <dbReference type="HAMAP-Rule" id="MF_01405"/>
    </source>
</evidence>
<gene>
    <name type="ordered locus">EAT1b_2634</name>
</gene>
<sequence>MKLIIATHNPGKVKELEGMLTPLGFEVESLLDYPDAPETDETGTTFEENAALKATEAAAYFGHAVLADDSGLEVDALDGAPGVYSARFAGPEKSDEANNALLLEKLNGETNRTARFVCALCLAKPSGETLTVRGTIEGTIGYSPQGENGFGYDPLFIVPSLHKTAAELERDEKAVVSHRGQALRKLEAEIIPFMKG</sequence>
<keyword id="KW-0378">Hydrolase</keyword>
<keyword id="KW-0460">Magnesium</keyword>
<keyword id="KW-0479">Metal-binding</keyword>
<keyword id="KW-0546">Nucleotide metabolism</keyword>
<keyword id="KW-0547">Nucleotide-binding</keyword>
<name>IXTPA_EXISA</name>
<protein>
    <recommendedName>
        <fullName evidence="1">dITP/XTP pyrophosphatase</fullName>
        <ecNumber evidence="1">3.6.1.66</ecNumber>
    </recommendedName>
    <alternativeName>
        <fullName evidence="1">Non-canonical purine NTP pyrophosphatase</fullName>
    </alternativeName>
    <alternativeName>
        <fullName evidence="1">Non-standard purine NTP pyrophosphatase</fullName>
    </alternativeName>
    <alternativeName>
        <fullName evidence="1">Nucleoside-triphosphate diphosphatase</fullName>
    </alternativeName>
    <alternativeName>
        <fullName evidence="1">Nucleoside-triphosphate pyrophosphatase</fullName>
        <shortName evidence="1">NTPase</shortName>
    </alternativeName>
</protein>
<reference key="1">
    <citation type="journal article" date="2011" name="J. Bacteriol.">
        <title>Complete genome sequence of the Thermophilic Bacterium Exiguobacterium sp. AT1b.</title>
        <authorList>
            <person name="Vishnivetskaya T.A."/>
            <person name="Lucas S."/>
            <person name="Copeland A."/>
            <person name="Lapidus A."/>
            <person name="Glavina del Rio T."/>
            <person name="Dalin E."/>
            <person name="Tice H."/>
            <person name="Bruce D.C."/>
            <person name="Goodwin L.A."/>
            <person name="Pitluck S."/>
            <person name="Saunders E."/>
            <person name="Brettin T."/>
            <person name="Detter C."/>
            <person name="Han C."/>
            <person name="Larimer F."/>
            <person name="Land M.L."/>
            <person name="Hauser L.J."/>
            <person name="Kyrpides N.C."/>
            <person name="Ovchinnikova G."/>
            <person name="Kathariou S."/>
            <person name="Ramaley R.F."/>
            <person name="Rodrigues D.F."/>
            <person name="Hendrix C."/>
            <person name="Richardson P."/>
            <person name="Tiedje J.M."/>
        </authorList>
    </citation>
    <scope>NUCLEOTIDE SEQUENCE [LARGE SCALE GENOMIC DNA]</scope>
    <source>
        <strain>ATCC BAA-1283 / AT1b</strain>
    </source>
</reference>
<comment type="function">
    <text evidence="1">Pyrophosphatase that catalyzes the hydrolysis of nucleoside triphosphates to their monophosphate derivatives, with a high preference for the non-canonical purine nucleotides XTP (xanthosine triphosphate), dITP (deoxyinosine triphosphate) and ITP. Seems to function as a house-cleaning enzyme that removes non-canonical purine nucleotides from the nucleotide pool, thus preventing their incorporation into DNA/RNA and avoiding chromosomal lesions.</text>
</comment>
<comment type="catalytic activity">
    <reaction evidence="1">
        <text>XTP + H2O = XMP + diphosphate + H(+)</text>
        <dbReference type="Rhea" id="RHEA:28610"/>
        <dbReference type="ChEBI" id="CHEBI:15377"/>
        <dbReference type="ChEBI" id="CHEBI:15378"/>
        <dbReference type="ChEBI" id="CHEBI:33019"/>
        <dbReference type="ChEBI" id="CHEBI:57464"/>
        <dbReference type="ChEBI" id="CHEBI:61314"/>
        <dbReference type="EC" id="3.6.1.66"/>
    </reaction>
</comment>
<comment type="catalytic activity">
    <reaction evidence="1">
        <text>dITP + H2O = dIMP + diphosphate + H(+)</text>
        <dbReference type="Rhea" id="RHEA:28342"/>
        <dbReference type="ChEBI" id="CHEBI:15377"/>
        <dbReference type="ChEBI" id="CHEBI:15378"/>
        <dbReference type="ChEBI" id="CHEBI:33019"/>
        <dbReference type="ChEBI" id="CHEBI:61194"/>
        <dbReference type="ChEBI" id="CHEBI:61382"/>
        <dbReference type="EC" id="3.6.1.66"/>
    </reaction>
</comment>
<comment type="catalytic activity">
    <reaction evidence="1">
        <text>ITP + H2O = IMP + diphosphate + H(+)</text>
        <dbReference type="Rhea" id="RHEA:29399"/>
        <dbReference type="ChEBI" id="CHEBI:15377"/>
        <dbReference type="ChEBI" id="CHEBI:15378"/>
        <dbReference type="ChEBI" id="CHEBI:33019"/>
        <dbReference type="ChEBI" id="CHEBI:58053"/>
        <dbReference type="ChEBI" id="CHEBI:61402"/>
        <dbReference type="EC" id="3.6.1.66"/>
    </reaction>
</comment>
<comment type="cofactor">
    <cofactor evidence="1">
        <name>Mg(2+)</name>
        <dbReference type="ChEBI" id="CHEBI:18420"/>
    </cofactor>
    <text evidence="1">Binds 1 Mg(2+) ion per subunit.</text>
</comment>
<comment type="subunit">
    <text evidence="1">Homodimer.</text>
</comment>
<comment type="similarity">
    <text evidence="1">Belongs to the HAM1 NTPase family.</text>
</comment>
<organism>
    <name type="scientific">Exiguobacterium sp. (strain ATCC BAA-1283 / AT1b)</name>
    <dbReference type="NCBI Taxonomy" id="360911"/>
    <lineage>
        <taxon>Bacteria</taxon>
        <taxon>Bacillati</taxon>
        <taxon>Bacillota</taxon>
        <taxon>Bacilli</taxon>
        <taxon>Bacillales</taxon>
        <taxon>Bacillales Family XII. Incertae Sedis</taxon>
        <taxon>Exiguobacterium</taxon>
    </lineage>
</organism>
<feature type="chain" id="PRO_1000215203" description="dITP/XTP pyrophosphatase">
    <location>
        <begin position="1"/>
        <end position="196"/>
    </location>
</feature>
<feature type="active site" description="Proton acceptor" evidence="1">
    <location>
        <position position="69"/>
    </location>
</feature>
<feature type="binding site" evidence="1">
    <location>
        <begin position="7"/>
        <end position="12"/>
    </location>
    <ligand>
        <name>substrate</name>
    </ligand>
</feature>
<feature type="binding site" evidence="1">
    <location>
        <position position="40"/>
    </location>
    <ligand>
        <name>Mg(2+)</name>
        <dbReference type="ChEBI" id="CHEBI:18420"/>
    </ligand>
</feature>
<feature type="binding site" evidence="1">
    <location>
        <position position="69"/>
    </location>
    <ligand>
        <name>Mg(2+)</name>
        <dbReference type="ChEBI" id="CHEBI:18420"/>
    </ligand>
</feature>
<feature type="binding site" evidence="1">
    <location>
        <position position="70"/>
    </location>
    <ligand>
        <name>substrate</name>
    </ligand>
</feature>
<feature type="binding site" evidence="1">
    <location>
        <begin position="150"/>
        <end position="153"/>
    </location>
    <ligand>
        <name>substrate</name>
    </ligand>
</feature>
<feature type="binding site" evidence="1">
    <location>
        <position position="173"/>
    </location>
    <ligand>
        <name>substrate</name>
    </ligand>
</feature>
<feature type="binding site" evidence="1">
    <location>
        <begin position="178"/>
        <end position="179"/>
    </location>
    <ligand>
        <name>substrate</name>
    </ligand>
</feature>
<accession>C4L4I7</accession>